<organism>
    <name type="scientific">Bos taurus</name>
    <name type="common">Bovine</name>
    <dbReference type="NCBI Taxonomy" id="9913"/>
    <lineage>
        <taxon>Eukaryota</taxon>
        <taxon>Metazoa</taxon>
        <taxon>Chordata</taxon>
        <taxon>Craniata</taxon>
        <taxon>Vertebrata</taxon>
        <taxon>Euteleostomi</taxon>
        <taxon>Mammalia</taxon>
        <taxon>Eutheria</taxon>
        <taxon>Laurasiatheria</taxon>
        <taxon>Artiodactyla</taxon>
        <taxon>Ruminantia</taxon>
        <taxon>Pecora</taxon>
        <taxon>Bovidae</taxon>
        <taxon>Bovinae</taxon>
        <taxon>Bos</taxon>
    </lineage>
</organism>
<protein>
    <recommendedName>
        <fullName>NADH dehydrogenase [ubiquinone] 1 beta subcomplex subunit 9</fullName>
    </recommendedName>
    <alternativeName>
        <fullName>Complex I-B22</fullName>
        <shortName>CI-B22</shortName>
    </alternativeName>
    <alternativeName>
        <fullName>NADH-ubiquinone oxidoreductase B22 subunit</fullName>
    </alternativeName>
</protein>
<accession>Q02369</accession>
<accession>Q3SZU8</accession>
<dbReference type="EMBL" id="X64836">
    <property type="protein sequence ID" value="CAA46048.1"/>
    <property type="molecule type" value="mRNA"/>
</dbReference>
<dbReference type="EMBL" id="BC102701">
    <property type="protein sequence ID" value="AAI02702.1"/>
    <property type="molecule type" value="mRNA"/>
</dbReference>
<dbReference type="PIR" id="S28256">
    <property type="entry name" value="S28256"/>
</dbReference>
<dbReference type="RefSeq" id="NP_786977.1">
    <property type="nucleotide sequence ID" value="NM_175783.4"/>
</dbReference>
<dbReference type="PDB" id="5LC5">
    <property type="method" value="EM"/>
    <property type="resolution" value="4.35 A"/>
    <property type="chains" value="n=11-137"/>
</dbReference>
<dbReference type="PDB" id="5LDW">
    <property type="method" value="EM"/>
    <property type="resolution" value="4.27 A"/>
    <property type="chains" value="n=11-137"/>
</dbReference>
<dbReference type="PDB" id="5LDX">
    <property type="method" value="EM"/>
    <property type="resolution" value="5.60 A"/>
    <property type="chains" value="n=11-137"/>
</dbReference>
<dbReference type="PDB" id="5O31">
    <property type="method" value="EM"/>
    <property type="resolution" value="4.13 A"/>
    <property type="chains" value="n=2-179"/>
</dbReference>
<dbReference type="PDB" id="7DGQ">
    <property type="method" value="EM"/>
    <property type="resolution" value="5.00 A"/>
    <property type="chains" value="f=2-179"/>
</dbReference>
<dbReference type="PDB" id="7DGR">
    <property type="method" value="EM"/>
    <property type="resolution" value="4.60 A"/>
    <property type="chains" value="f=2-179"/>
</dbReference>
<dbReference type="PDB" id="7DGS">
    <property type="method" value="EM"/>
    <property type="resolution" value="7.80 A"/>
    <property type="chains" value="f=2-179"/>
</dbReference>
<dbReference type="PDB" id="7DGZ">
    <property type="method" value="EM"/>
    <property type="resolution" value="3.80 A"/>
    <property type="chains" value="f=2-179"/>
</dbReference>
<dbReference type="PDB" id="7DH0">
    <property type="method" value="EM"/>
    <property type="resolution" value="4.20 A"/>
    <property type="chains" value="f=2-179"/>
</dbReference>
<dbReference type="PDB" id="7DKF">
    <property type="method" value="EM"/>
    <property type="resolution" value="8.30 A"/>
    <property type="chains" value="f2=2-179"/>
</dbReference>
<dbReference type="PDB" id="7QSD">
    <property type="method" value="EM"/>
    <property type="resolution" value="3.10 A"/>
    <property type="chains" value="n=1-179"/>
</dbReference>
<dbReference type="PDB" id="7QSK">
    <property type="method" value="EM"/>
    <property type="resolution" value="2.84 A"/>
    <property type="chains" value="n=1-179"/>
</dbReference>
<dbReference type="PDB" id="7QSL">
    <property type="method" value="EM"/>
    <property type="resolution" value="2.76 A"/>
    <property type="chains" value="n=1-179"/>
</dbReference>
<dbReference type="PDB" id="7QSM">
    <property type="method" value="EM"/>
    <property type="resolution" value="2.30 A"/>
    <property type="chains" value="n=1-179"/>
</dbReference>
<dbReference type="PDB" id="7QSN">
    <property type="method" value="EM"/>
    <property type="resolution" value="2.81 A"/>
    <property type="chains" value="n=1-179"/>
</dbReference>
<dbReference type="PDB" id="7QSO">
    <property type="method" value="EM"/>
    <property type="resolution" value="3.02 A"/>
    <property type="chains" value="n=1-179"/>
</dbReference>
<dbReference type="PDB" id="7R41">
    <property type="method" value="EM"/>
    <property type="resolution" value="2.30 A"/>
    <property type="chains" value="n=1-179"/>
</dbReference>
<dbReference type="PDB" id="7R42">
    <property type="method" value="EM"/>
    <property type="resolution" value="2.30 A"/>
    <property type="chains" value="n=1-179"/>
</dbReference>
<dbReference type="PDB" id="7R43">
    <property type="method" value="EM"/>
    <property type="resolution" value="2.40 A"/>
    <property type="chains" value="n=1-179"/>
</dbReference>
<dbReference type="PDB" id="7R44">
    <property type="method" value="EM"/>
    <property type="resolution" value="2.40 A"/>
    <property type="chains" value="n=1-179"/>
</dbReference>
<dbReference type="PDB" id="7R45">
    <property type="method" value="EM"/>
    <property type="resolution" value="2.40 A"/>
    <property type="chains" value="n=1-179"/>
</dbReference>
<dbReference type="PDB" id="7R46">
    <property type="method" value="EM"/>
    <property type="resolution" value="2.40 A"/>
    <property type="chains" value="n=1-179"/>
</dbReference>
<dbReference type="PDB" id="7R47">
    <property type="method" value="EM"/>
    <property type="resolution" value="2.30 A"/>
    <property type="chains" value="n=1-179"/>
</dbReference>
<dbReference type="PDB" id="7R48">
    <property type="method" value="EM"/>
    <property type="resolution" value="2.30 A"/>
    <property type="chains" value="n=1-179"/>
</dbReference>
<dbReference type="PDB" id="7R4C">
    <property type="method" value="EM"/>
    <property type="resolution" value="2.30 A"/>
    <property type="chains" value="n=1-179"/>
</dbReference>
<dbReference type="PDB" id="7R4D">
    <property type="method" value="EM"/>
    <property type="resolution" value="2.30 A"/>
    <property type="chains" value="n=1-179"/>
</dbReference>
<dbReference type="PDB" id="7R4F">
    <property type="method" value="EM"/>
    <property type="resolution" value="2.40 A"/>
    <property type="chains" value="n=1-179"/>
</dbReference>
<dbReference type="PDB" id="7R4G">
    <property type="method" value="EM"/>
    <property type="resolution" value="2.50 A"/>
    <property type="chains" value="n=1-179"/>
</dbReference>
<dbReference type="PDB" id="8Q0A">
    <property type="method" value="EM"/>
    <property type="resolution" value="3.10 A"/>
    <property type="chains" value="n=1-179"/>
</dbReference>
<dbReference type="PDB" id="8Q0F">
    <property type="method" value="EM"/>
    <property type="resolution" value="3.10 A"/>
    <property type="chains" value="n=1-179"/>
</dbReference>
<dbReference type="PDB" id="8Q0J">
    <property type="method" value="EM"/>
    <property type="resolution" value="3.80 A"/>
    <property type="chains" value="n=1-179"/>
</dbReference>
<dbReference type="PDB" id="8Q0M">
    <property type="method" value="EM"/>
    <property type="resolution" value="3.10 A"/>
    <property type="chains" value="n=1-179"/>
</dbReference>
<dbReference type="PDB" id="8Q0O">
    <property type="method" value="EM"/>
    <property type="resolution" value="3.10 A"/>
    <property type="chains" value="n=1-179"/>
</dbReference>
<dbReference type="PDB" id="8Q0Q">
    <property type="method" value="EM"/>
    <property type="resolution" value="3.60 A"/>
    <property type="chains" value="n=1-179"/>
</dbReference>
<dbReference type="PDB" id="8Q1P">
    <property type="method" value="EM"/>
    <property type="resolution" value="2.90 A"/>
    <property type="chains" value="n=1-179"/>
</dbReference>
<dbReference type="PDB" id="8Q1U">
    <property type="method" value="EM"/>
    <property type="resolution" value="3.30 A"/>
    <property type="chains" value="n=1-179"/>
</dbReference>
<dbReference type="PDB" id="8Q1Y">
    <property type="method" value="EM"/>
    <property type="resolution" value="2.60 A"/>
    <property type="chains" value="n=1-179"/>
</dbReference>
<dbReference type="PDB" id="8Q25">
    <property type="method" value="EM"/>
    <property type="resolution" value="2.80 A"/>
    <property type="chains" value="n=1-179"/>
</dbReference>
<dbReference type="PDB" id="8Q45">
    <property type="method" value="EM"/>
    <property type="resolution" value="2.70 A"/>
    <property type="chains" value="n=1-179"/>
</dbReference>
<dbReference type="PDB" id="8Q46">
    <property type="method" value="EM"/>
    <property type="resolution" value="2.60 A"/>
    <property type="chains" value="n=1-179"/>
</dbReference>
<dbReference type="PDB" id="8Q47">
    <property type="method" value="EM"/>
    <property type="resolution" value="2.90 A"/>
    <property type="chains" value="n=1-179"/>
</dbReference>
<dbReference type="PDB" id="8Q48">
    <property type="method" value="EM"/>
    <property type="resolution" value="2.50 A"/>
    <property type="chains" value="n=1-179"/>
</dbReference>
<dbReference type="PDB" id="8Q49">
    <property type="method" value="EM"/>
    <property type="resolution" value="2.60 A"/>
    <property type="chains" value="n=1-179"/>
</dbReference>
<dbReference type="PDB" id="8Q4A">
    <property type="method" value="EM"/>
    <property type="resolution" value="2.60 A"/>
    <property type="chains" value="n=1-179"/>
</dbReference>
<dbReference type="PDBsum" id="5LC5"/>
<dbReference type="PDBsum" id="5LDW"/>
<dbReference type="PDBsum" id="5LDX"/>
<dbReference type="PDBsum" id="5O31"/>
<dbReference type="PDBsum" id="7DGQ"/>
<dbReference type="PDBsum" id="7DGR"/>
<dbReference type="PDBsum" id="7DGS"/>
<dbReference type="PDBsum" id="7DGZ"/>
<dbReference type="PDBsum" id="7DH0"/>
<dbReference type="PDBsum" id="7DKF"/>
<dbReference type="PDBsum" id="7QSD"/>
<dbReference type="PDBsum" id="7QSK"/>
<dbReference type="PDBsum" id="7QSL"/>
<dbReference type="PDBsum" id="7QSM"/>
<dbReference type="PDBsum" id="7QSN"/>
<dbReference type="PDBsum" id="7QSO"/>
<dbReference type="PDBsum" id="7R41"/>
<dbReference type="PDBsum" id="7R42"/>
<dbReference type="PDBsum" id="7R43"/>
<dbReference type="PDBsum" id="7R44"/>
<dbReference type="PDBsum" id="7R45"/>
<dbReference type="PDBsum" id="7R46"/>
<dbReference type="PDBsum" id="7R47"/>
<dbReference type="PDBsum" id="7R48"/>
<dbReference type="PDBsum" id="7R4C"/>
<dbReference type="PDBsum" id="7R4D"/>
<dbReference type="PDBsum" id="7R4F"/>
<dbReference type="PDBsum" id="7R4G"/>
<dbReference type="PDBsum" id="8Q0A"/>
<dbReference type="PDBsum" id="8Q0F"/>
<dbReference type="PDBsum" id="8Q0J"/>
<dbReference type="PDBsum" id="8Q0M"/>
<dbReference type="PDBsum" id="8Q0O"/>
<dbReference type="PDBsum" id="8Q0Q"/>
<dbReference type="PDBsum" id="8Q1P"/>
<dbReference type="PDBsum" id="8Q1U"/>
<dbReference type="PDBsum" id="8Q1Y"/>
<dbReference type="PDBsum" id="8Q25"/>
<dbReference type="PDBsum" id="8Q45"/>
<dbReference type="PDBsum" id="8Q46"/>
<dbReference type="PDBsum" id="8Q47"/>
<dbReference type="PDBsum" id="8Q48"/>
<dbReference type="PDBsum" id="8Q49"/>
<dbReference type="PDBsum" id="8Q4A"/>
<dbReference type="EMDB" id="EMD-14127"/>
<dbReference type="EMDB" id="EMD-14132"/>
<dbReference type="EMDB" id="EMD-14133"/>
<dbReference type="EMDB" id="EMD-14134"/>
<dbReference type="EMDB" id="EMD-14139"/>
<dbReference type="EMDB" id="EMD-14140"/>
<dbReference type="EMDB" id="EMD-14251"/>
<dbReference type="EMDB" id="EMD-14256"/>
<dbReference type="EMDB" id="EMD-14261"/>
<dbReference type="EMDB" id="EMD-14266"/>
<dbReference type="EMDB" id="EMD-14272"/>
<dbReference type="EMDB" id="EMD-14277"/>
<dbReference type="EMDB" id="EMD-14282"/>
<dbReference type="EMDB" id="EMD-14287"/>
<dbReference type="EMDB" id="EMD-14292"/>
<dbReference type="EMDB" id="EMD-14297"/>
<dbReference type="EMDB" id="EMD-14302"/>
<dbReference type="EMDB" id="EMD-14307"/>
<dbReference type="EMDB" id="EMD-18051"/>
<dbReference type="EMDB" id="EMD-18052"/>
<dbReference type="EMDB" id="EMD-18054"/>
<dbReference type="EMDB" id="EMD-18055"/>
<dbReference type="EMDB" id="EMD-18057"/>
<dbReference type="EMDB" id="EMD-18059"/>
<dbReference type="EMDB" id="EMD-18066"/>
<dbReference type="EMDB" id="EMD-18067"/>
<dbReference type="EMDB" id="EMD-18068"/>
<dbReference type="EMDB" id="EMD-18069"/>
<dbReference type="EMDB" id="EMD-18138"/>
<dbReference type="EMDB" id="EMD-18139"/>
<dbReference type="EMDB" id="EMD-18140"/>
<dbReference type="EMDB" id="EMD-18141"/>
<dbReference type="EMDB" id="EMD-18142"/>
<dbReference type="EMDB" id="EMD-18143"/>
<dbReference type="EMDB" id="EMD-30673"/>
<dbReference type="EMDB" id="EMD-30674"/>
<dbReference type="EMDB" id="EMD-30675"/>
<dbReference type="EMDB" id="EMD-30676"/>
<dbReference type="EMDB" id="EMD-30677"/>
<dbReference type="EMDB" id="EMD-30706"/>
<dbReference type="EMDB" id="EMD-3731"/>
<dbReference type="EMDB" id="EMD-4032"/>
<dbReference type="EMDB" id="EMD-4040"/>
<dbReference type="EMDB" id="EMD-4041"/>
<dbReference type="SMR" id="Q02369"/>
<dbReference type="CORUM" id="Q02369"/>
<dbReference type="DIP" id="DIP-38818N"/>
<dbReference type="FunCoup" id="Q02369">
    <property type="interactions" value="2661"/>
</dbReference>
<dbReference type="IntAct" id="Q02369">
    <property type="interactions" value="2"/>
</dbReference>
<dbReference type="STRING" id="9913.ENSBTAP00000027191"/>
<dbReference type="TCDB" id="3.D.1.6.1">
    <property type="family name" value="the h+ or na+-translocating nadh dehydrogenase (ndh) family"/>
</dbReference>
<dbReference type="PaxDb" id="9913-ENSBTAP00000027191"/>
<dbReference type="PeptideAtlas" id="Q02369"/>
<dbReference type="GeneID" id="327660"/>
<dbReference type="KEGG" id="bta:327660"/>
<dbReference type="CTD" id="4715"/>
<dbReference type="VEuPathDB" id="HostDB:ENSBTAG00000020405"/>
<dbReference type="eggNOG" id="KOG3466">
    <property type="taxonomic scope" value="Eukaryota"/>
</dbReference>
<dbReference type="HOGENOM" id="CLU_108081_0_0_1"/>
<dbReference type="InParanoid" id="Q02369"/>
<dbReference type="OMA" id="CVFRDKY"/>
<dbReference type="OrthoDB" id="13598at2759"/>
<dbReference type="TreeFam" id="TF315148"/>
<dbReference type="Reactome" id="R-BTA-611105">
    <property type="pathway name" value="Respiratory electron transport"/>
</dbReference>
<dbReference type="Reactome" id="R-BTA-6799198">
    <property type="pathway name" value="Complex I biogenesis"/>
</dbReference>
<dbReference type="Proteomes" id="UP000009136">
    <property type="component" value="Chromosome 14"/>
</dbReference>
<dbReference type="Bgee" id="ENSBTAG00000020405">
    <property type="expression patterns" value="Expressed in tongue muscle and 107 other cell types or tissues"/>
</dbReference>
<dbReference type="GO" id="GO:0005743">
    <property type="term" value="C:mitochondrial inner membrane"/>
    <property type="evidence" value="ECO:0007669"/>
    <property type="project" value="UniProtKB-SubCell"/>
</dbReference>
<dbReference type="GO" id="GO:0005739">
    <property type="term" value="C:mitochondrion"/>
    <property type="evidence" value="ECO:0000305"/>
    <property type="project" value="UniProtKB"/>
</dbReference>
<dbReference type="GO" id="GO:0045271">
    <property type="term" value="C:respiratory chain complex I"/>
    <property type="evidence" value="ECO:0000314"/>
    <property type="project" value="UniProtKB"/>
</dbReference>
<dbReference type="GO" id="GO:0006120">
    <property type="term" value="P:mitochondrial electron transport, NADH to ubiquinone"/>
    <property type="evidence" value="ECO:0007669"/>
    <property type="project" value="InterPro"/>
</dbReference>
<dbReference type="CDD" id="cd20263">
    <property type="entry name" value="Complex1_LYR_NDUFB9_LYRM3"/>
    <property type="match status" value="1"/>
</dbReference>
<dbReference type="InterPro" id="IPR008011">
    <property type="entry name" value="Complex1_LYR_dom"/>
</dbReference>
<dbReference type="InterPro" id="IPR045292">
    <property type="entry name" value="Complex1_LYR_NDUFB9_LYRM3"/>
</dbReference>
<dbReference type="InterPro" id="IPR033034">
    <property type="entry name" value="NDUFB9"/>
</dbReference>
<dbReference type="PANTHER" id="PTHR12868:SF0">
    <property type="entry name" value="NADH DEHYDROGENASE [UBIQUINONE] 1 BETA SUBCOMPLEX SUBUNIT 9"/>
    <property type="match status" value="1"/>
</dbReference>
<dbReference type="PANTHER" id="PTHR12868">
    <property type="entry name" value="NADH-UBIQUINONE OXIDOREDUCTASE B22 SUBUNIT"/>
    <property type="match status" value="1"/>
</dbReference>
<dbReference type="Pfam" id="PF05347">
    <property type="entry name" value="Complex1_LYR"/>
    <property type="match status" value="1"/>
</dbReference>
<feature type="initiator methionine" description="Removed" evidence="1">
    <location>
        <position position="1"/>
    </location>
</feature>
<feature type="chain" id="PRO_0000174305" description="NADH dehydrogenase [ubiquinone] 1 beta subcomplex subunit 9">
    <location>
        <begin position="2"/>
        <end position="179"/>
    </location>
</feature>
<feature type="region of interest" description="Disordered" evidence="2">
    <location>
        <begin position="139"/>
        <end position="160"/>
    </location>
</feature>
<feature type="modified residue" description="N-acetylalanine" evidence="1">
    <location>
        <position position="2"/>
    </location>
</feature>
<feature type="modified residue" description="Phosphoserine" evidence="1">
    <location>
        <position position="85"/>
    </location>
</feature>
<feature type="helix" evidence="9">
    <location>
        <begin position="12"/>
        <end position="31"/>
    </location>
</feature>
<feature type="helix" evidence="9">
    <location>
        <begin position="34"/>
        <end position="50"/>
    </location>
</feature>
<feature type="turn" evidence="8">
    <location>
        <begin position="51"/>
        <end position="53"/>
    </location>
</feature>
<feature type="helix" evidence="9">
    <location>
        <begin position="57"/>
        <end position="74"/>
    </location>
</feature>
<feature type="turn" evidence="9">
    <location>
        <begin position="89"/>
        <end position="94"/>
    </location>
</feature>
<feature type="helix" evidence="9">
    <location>
        <begin position="95"/>
        <end position="97"/>
    </location>
</feature>
<feature type="helix" evidence="9">
    <location>
        <begin position="101"/>
        <end position="106"/>
    </location>
</feature>
<feature type="helix" evidence="9">
    <location>
        <begin position="109"/>
        <end position="112"/>
    </location>
</feature>
<feature type="helix" evidence="9">
    <location>
        <begin position="116"/>
        <end position="143"/>
    </location>
</feature>
<feature type="strand" evidence="9">
    <location>
        <begin position="150"/>
        <end position="152"/>
    </location>
</feature>
<feature type="strand" evidence="10">
    <location>
        <begin position="159"/>
        <end position="161"/>
    </location>
</feature>
<feature type="helix" evidence="9">
    <location>
        <begin position="168"/>
        <end position="171"/>
    </location>
</feature>
<sequence length="179" mass="21789">MAFLSSGAYLTHQQKVLRLYKRALRHLESWCIHRDKYRYFACLLRARFDEHKNEKDMVKATQLLREAEEEFWHGQHPQPYIFPESPGGTSYERYECYKVPEWCLDDWHPSEKAMYPDYFAKREQWKKLRRESWEREVKQLQEETPVGGPRTEALPPARKQGDLPPLWWHIVTRPRERPM</sequence>
<gene>
    <name type="primary">NDUFB9</name>
    <name type="synonym">UQOR22</name>
</gene>
<reference key="1">
    <citation type="journal article" date="1992" name="J. Mol. Biol.">
        <title>Sequences of 20 subunits of NADH:ubiquinone oxidoreductase from bovine heart mitochondria. Application of a novel strategy for sequencing proteins using the polymerase chain reaction.</title>
        <authorList>
            <person name="Walker J.E."/>
            <person name="Arizmendi J.M."/>
            <person name="Dupuis A."/>
            <person name="Fearnley I.M."/>
            <person name="Finel M."/>
            <person name="Medd S.M."/>
            <person name="Pilkington S.J."/>
            <person name="Runswick M.J."/>
            <person name="Skehel J.M."/>
        </authorList>
    </citation>
    <scope>NUCLEOTIDE SEQUENCE [MRNA]</scope>
    <scope>PROTEIN SEQUENCE OF 58-84 AND 115-144</scope>
    <source>
        <tissue>Heart</tissue>
    </source>
</reference>
<reference key="2">
    <citation type="submission" date="2005-08" db="EMBL/GenBank/DDBJ databases">
        <authorList>
            <consortium name="NIH - Mammalian Gene Collection (MGC) project"/>
        </authorList>
    </citation>
    <scope>NUCLEOTIDE SEQUENCE [LARGE SCALE MRNA]</scope>
    <source>
        <strain>Crossbred X Angus</strain>
        <tissue>Ileum</tissue>
    </source>
</reference>
<reference key="3">
    <citation type="journal article" date="2000" name="Biochemistry">
        <title>Resolution of the membrane domain of bovine complex I into subcomplexes: implications for the structural organization of the enzyme.</title>
        <authorList>
            <person name="Sazanov L.A."/>
            <person name="Peak-Chew S.Y."/>
            <person name="Fearnley I.M."/>
            <person name="Walker J.E."/>
        </authorList>
    </citation>
    <scope>PARTIAL PROTEIN SEQUENCE</scope>
    <scope>SUBUNIT</scope>
    <scope>IDENTIFICATION IN COMPLEX I</scope>
    <scope>SUBCELLULAR LOCATION</scope>
</reference>
<reference key="4">
    <citation type="journal article" date="2008" name="Anal. Biochem.">
        <title>Subunit analysis of bovine heart complex I by reversed-phase high-performance liquid chromatography, electrospray ionization-tandem mass spectrometry, and matrix-assisted laser desorption/ionization-time-of-flight mass spectrometry.</title>
        <authorList>
            <person name="Lemma-Gray P."/>
            <person name="Valusova E."/>
            <person name="Carroll C.A."/>
            <person name="Weintraub S.T."/>
            <person name="Musatov A."/>
            <person name="Robinson N.C."/>
        </authorList>
    </citation>
    <scope>SUBUNIT</scope>
    <scope>IDENTIFICATION IN COMPLEX I</scope>
    <scope>SUBCELLULAR LOCATION</scope>
</reference>
<proteinExistence type="evidence at protein level"/>
<evidence type="ECO:0000250" key="1">
    <source>
        <dbReference type="UniProtKB" id="Q9Y6M9"/>
    </source>
</evidence>
<evidence type="ECO:0000256" key="2">
    <source>
        <dbReference type="SAM" id="MobiDB-lite"/>
    </source>
</evidence>
<evidence type="ECO:0000269" key="3">
    <source>
    </source>
</evidence>
<evidence type="ECO:0000269" key="4">
    <source>
    </source>
</evidence>
<evidence type="ECO:0000305" key="5"/>
<evidence type="ECO:0000305" key="6">
    <source>
    </source>
</evidence>
<evidence type="ECO:0000305" key="7">
    <source>
    </source>
</evidence>
<evidence type="ECO:0007829" key="8">
    <source>
        <dbReference type="PDB" id="7QSL"/>
    </source>
</evidence>
<evidence type="ECO:0007829" key="9">
    <source>
        <dbReference type="PDB" id="7QSM"/>
    </source>
</evidence>
<evidence type="ECO:0007829" key="10">
    <source>
        <dbReference type="PDB" id="8Q48"/>
    </source>
</evidence>
<comment type="function">
    <text evidence="1">Accessory subunit of the mitochondrial membrane respiratory chain NADH dehydrogenase (Complex I), that is believed to be not involved in catalysis. Complex I functions in the transfer of electrons from NADH to the respiratory chain. The immediate electron acceptor for the enzyme is believed to be ubiquinone.</text>
</comment>
<comment type="subunit">
    <text evidence="3 4">Mammalian complex I is composed of 45 different subunits.</text>
</comment>
<comment type="subcellular location">
    <subcellularLocation>
        <location evidence="6 7">Mitochondrion inner membrane</location>
        <topology evidence="5">Peripheral membrane protein</topology>
        <orientation evidence="5">Matrix side</orientation>
    </subcellularLocation>
</comment>
<comment type="similarity">
    <text evidence="5">Belongs to the complex I LYR family.</text>
</comment>
<name>NDUB9_BOVIN</name>
<keyword id="KW-0002">3D-structure</keyword>
<keyword id="KW-0007">Acetylation</keyword>
<keyword id="KW-0903">Direct protein sequencing</keyword>
<keyword id="KW-0249">Electron transport</keyword>
<keyword id="KW-0472">Membrane</keyword>
<keyword id="KW-0496">Mitochondrion</keyword>
<keyword id="KW-0999">Mitochondrion inner membrane</keyword>
<keyword id="KW-0597">Phosphoprotein</keyword>
<keyword id="KW-1185">Reference proteome</keyword>
<keyword id="KW-0679">Respiratory chain</keyword>
<keyword id="KW-0813">Transport</keyword>